<proteinExistence type="predicted"/>
<keyword id="KW-0040">ANK repeat</keyword>
<keyword id="KW-0677">Repeat</keyword>
<organism>
    <name type="scientific">Rickettsia felis (strain ATCC VR-1525 / URRWXCal2)</name>
    <name type="common">Rickettsia azadi</name>
    <dbReference type="NCBI Taxonomy" id="315456"/>
    <lineage>
        <taxon>Bacteria</taxon>
        <taxon>Pseudomonadati</taxon>
        <taxon>Pseudomonadota</taxon>
        <taxon>Alphaproteobacteria</taxon>
        <taxon>Rickettsiales</taxon>
        <taxon>Rickettsiaceae</taxon>
        <taxon>Rickettsieae</taxon>
        <taxon>Rickettsia</taxon>
        <taxon>spotted fever group</taxon>
    </lineage>
</organism>
<sequence length="305" mass="34093">MMSNYNKNNLFAKLAYGDLSEVQALLKSGVNIDEHKNERGETALYNTLFTGYMDRAAFLLKHKASPNIPDNSGQTILYLLVMNNSIDKMKFLFENTTNIDLEIKSFCGHSPLHAATFNENIEAMELLLKKGADINSKDSFGASALHGTIYNNKLKAAELLLNHGADVNAKDNYEDTILHNIIGTNNIEAAKFLLQNGADVNIENNNNFTPLDRAILGQHKELAELFLKSGATIKIGNTMDFKILSEKLLDMNIDKELVFKSLLISNIDDQTKFQLLSDFNFKADIHHKIGLLLSLTLNCIFSAYK</sequence>
<gene>
    <name type="ordered locus">RF_0580</name>
</gene>
<name>Y580_RICFE</name>
<protein>
    <recommendedName>
        <fullName>Putative ankyrin repeat protein RF_0580</fullName>
    </recommendedName>
</protein>
<reference key="1">
    <citation type="journal article" date="2005" name="PLoS Biol.">
        <title>The genome sequence of Rickettsia felis identifies the first putative conjugative plasmid in an obligate intracellular parasite.</title>
        <authorList>
            <person name="Ogata H."/>
            <person name="Renesto P."/>
            <person name="Audic S."/>
            <person name="Robert C."/>
            <person name="Blanc G."/>
            <person name="Fournier P.-E."/>
            <person name="Parinello H."/>
            <person name="Claverie J.-M."/>
            <person name="Raoult D."/>
        </authorList>
    </citation>
    <scope>NUCLEOTIDE SEQUENCE [LARGE SCALE GENOMIC DNA]</scope>
    <source>
        <strain>ATCC VR-1525 / URRWXCal2</strain>
    </source>
</reference>
<accession>Q4ULZ2</accession>
<dbReference type="EMBL" id="CP000053">
    <property type="protein sequence ID" value="AAY61431.1"/>
    <property type="molecule type" value="Genomic_DNA"/>
</dbReference>
<dbReference type="SMR" id="Q4ULZ2"/>
<dbReference type="STRING" id="315456.RF_0580"/>
<dbReference type="KEGG" id="rfe:RF_0580"/>
<dbReference type="eggNOG" id="COG0666">
    <property type="taxonomic scope" value="Bacteria"/>
</dbReference>
<dbReference type="HOGENOM" id="CLU_911787_0_0_5"/>
<dbReference type="OrthoDB" id="7390289at2"/>
<dbReference type="Proteomes" id="UP000008548">
    <property type="component" value="Chromosome"/>
</dbReference>
<dbReference type="Gene3D" id="1.25.40.20">
    <property type="entry name" value="Ankyrin repeat-containing domain"/>
    <property type="match status" value="3"/>
</dbReference>
<dbReference type="InterPro" id="IPR051637">
    <property type="entry name" value="Ank_repeat_dom-contain_49"/>
</dbReference>
<dbReference type="InterPro" id="IPR002110">
    <property type="entry name" value="Ankyrin_rpt"/>
</dbReference>
<dbReference type="InterPro" id="IPR036770">
    <property type="entry name" value="Ankyrin_rpt-contain_sf"/>
</dbReference>
<dbReference type="PANTHER" id="PTHR24180">
    <property type="entry name" value="CYCLIN-DEPENDENT KINASE INHIBITOR 2C-RELATED"/>
    <property type="match status" value="1"/>
</dbReference>
<dbReference type="PANTHER" id="PTHR24180:SF45">
    <property type="entry name" value="POLY [ADP-RIBOSE] POLYMERASE TANKYRASE"/>
    <property type="match status" value="1"/>
</dbReference>
<dbReference type="Pfam" id="PF00023">
    <property type="entry name" value="Ank"/>
    <property type="match status" value="1"/>
</dbReference>
<dbReference type="Pfam" id="PF12796">
    <property type="entry name" value="Ank_2"/>
    <property type="match status" value="2"/>
</dbReference>
<dbReference type="PRINTS" id="PR01415">
    <property type="entry name" value="ANKYRIN"/>
</dbReference>
<dbReference type="SMART" id="SM00248">
    <property type="entry name" value="ANK"/>
    <property type="match status" value="7"/>
</dbReference>
<dbReference type="SUPFAM" id="SSF48403">
    <property type="entry name" value="Ankyrin repeat"/>
    <property type="match status" value="1"/>
</dbReference>
<dbReference type="PROSITE" id="PS50297">
    <property type="entry name" value="ANK_REP_REGION"/>
    <property type="match status" value="1"/>
</dbReference>
<dbReference type="PROSITE" id="PS50088">
    <property type="entry name" value="ANK_REPEAT"/>
    <property type="match status" value="4"/>
</dbReference>
<feature type="chain" id="PRO_0000281750" description="Putative ankyrin repeat protein RF_0580">
    <location>
        <begin position="1"/>
        <end position="305"/>
    </location>
</feature>
<feature type="repeat" description="ANK 1">
    <location>
        <begin position="5"/>
        <end position="34"/>
    </location>
</feature>
<feature type="repeat" description="ANK 2">
    <location>
        <begin position="39"/>
        <end position="68"/>
    </location>
</feature>
<feature type="repeat" description="ANK 3">
    <location>
        <begin position="72"/>
        <end position="101"/>
    </location>
</feature>
<feature type="repeat" description="ANK 4">
    <location>
        <begin position="107"/>
        <end position="136"/>
    </location>
</feature>
<feature type="repeat" description="ANK 5">
    <location>
        <begin position="140"/>
        <end position="169"/>
    </location>
</feature>
<feature type="repeat" description="ANK 6">
    <location>
        <begin position="173"/>
        <end position="202"/>
    </location>
</feature>
<feature type="repeat" description="ANK 7">
    <location>
        <begin position="206"/>
        <end position="235"/>
    </location>
</feature>